<sequence>MIIRKFSSKDLDAVEEIEREAFKTPYPTSLILGFWSMYPNCFYVAEIDGRVVGYILGSMDWGNGHIISLAVKKECRGLGIGTALLKTLENYYFNIANCNYIVLEVRVSNVLARRFYYRMGYRDRKLLPKYYEDGEDAILMIKKKPNAKGPLIITLW</sequence>
<evidence type="ECO:0000255" key="1">
    <source>
        <dbReference type="PROSITE-ProRule" id="PRU00532"/>
    </source>
</evidence>
<evidence type="ECO:0000305" key="2"/>
<name>Y1530_METJA</name>
<dbReference type="EC" id="2.3.1.-"/>
<dbReference type="EMBL" id="L77117">
    <property type="protein sequence ID" value="AAB99551.1"/>
    <property type="molecule type" value="Genomic_DNA"/>
</dbReference>
<dbReference type="PIR" id="A64491">
    <property type="entry name" value="A64491"/>
</dbReference>
<dbReference type="RefSeq" id="WP_010871054.1">
    <property type="nucleotide sequence ID" value="NC_000909.1"/>
</dbReference>
<dbReference type="SMR" id="Q58925"/>
<dbReference type="FunCoup" id="Q58925">
    <property type="interactions" value="160"/>
</dbReference>
<dbReference type="STRING" id="243232.MJ_1530"/>
<dbReference type="PaxDb" id="243232-MJ_1530"/>
<dbReference type="EnsemblBacteria" id="AAB99551">
    <property type="protein sequence ID" value="AAB99551"/>
    <property type="gene ID" value="MJ_1530"/>
</dbReference>
<dbReference type="GeneID" id="1452438"/>
<dbReference type="KEGG" id="mja:MJ_1530"/>
<dbReference type="eggNOG" id="arCOG00833">
    <property type="taxonomic scope" value="Archaea"/>
</dbReference>
<dbReference type="HOGENOM" id="CLU_013985_23_0_2"/>
<dbReference type="InParanoid" id="Q58925"/>
<dbReference type="OrthoDB" id="43754at2157"/>
<dbReference type="PhylomeDB" id="Q58925"/>
<dbReference type="Proteomes" id="UP000000805">
    <property type="component" value="Chromosome"/>
</dbReference>
<dbReference type="GO" id="GO:0031415">
    <property type="term" value="C:NatA complex"/>
    <property type="evidence" value="ECO:0007669"/>
    <property type="project" value="InterPro"/>
</dbReference>
<dbReference type="GO" id="GO:0004596">
    <property type="term" value="F:protein-N-terminal amino-acid acetyltransferase activity"/>
    <property type="evidence" value="ECO:0007669"/>
    <property type="project" value="InterPro"/>
</dbReference>
<dbReference type="CDD" id="cd04301">
    <property type="entry name" value="NAT_SF"/>
    <property type="match status" value="1"/>
</dbReference>
<dbReference type="Gene3D" id="3.40.630.30">
    <property type="match status" value="1"/>
</dbReference>
<dbReference type="InterPro" id="IPR006464">
    <property type="entry name" value="AcTrfase_RimI/Ard1"/>
</dbReference>
<dbReference type="InterPro" id="IPR016181">
    <property type="entry name" value="Acyl_CoA_acyltransferase"/>
</dbReference>
<dbReference type="InterPro" id="IPR045047">
    <property type="entry name" value="Ard1-like"/>
</dbReference>
<dbReference type="InterPro" id="IPR000182">
    <property type="entry name" value="GNAT_dom"/>
</dbReference>
<dbReference type="NCBIfam" id="TIGR01575">
    <property type="entry name" value="rimI"/>
    <property type="match status" value="1"/>
</dbReference>
<dbReference type="PANTHER" id="PTHR23091">
    <property type="entry name" value="N-TERMINAL ACETYLTRANSFERASE"/>
    <property type="match status" value="1"/>
</dbReference>
<dbReference type="PANTHER" id="PTHR23091:SF4">
    <property type="entry name" value="N-TERMINAL AMINO-ACID N(ALPHA)-ACETYLTRANSFERASE NATA"/>
    <property type="match status" value="1"/>
</dbReference>
<dbReference type="Pfam" id="PF00583">
    <property type="entry name" value="Acetyltransf_1"/>
    <property type="match status" value="1"/>
</dbReference>
<dbReference type="SUPFAM" id="SSF55729">
    <property type="entry name" value="Acyl-CoA N-acyltransferases (Nat)"/>
    <property type="match status" value="1"/>
</dbReference>
<dbReference type="PROSITE" id="PS51186">
    <property type="entry name" value="GNAT"/>
    <property type="match status" value="1"/>
</dbReference>
<gene>
    <name type="ordered locus">MJ1530</name>
</gene>
<proteinExistence type="inferred from homology"/>
<organism>
    <name type="scientific">Methanocaldococcus jannaschii (strain ATCC 43067 / DSM 2661 / JAL-1 / JCM 10045 / NBRC 100440)</name>
    <name type="common">Methanococcus jannaschii</name>
    <dbReference type="NCBI Taxonomy" id="243232"/>
    <lineage>
        <taxon>Archaea</taxon>
        <taxon>Methanobacteriati</taxon>
        <taxon>Methanobacteriota</taxon>
        <taxon>Methanomada group</taxon>
        <taxon>Methanococci</taxon>
        <taxon>Methanococcales</taxon>
        <taxon>Methanocaldococcaceae</taxon>
        <taxon>Methanocaldococcus</taxon>
    </lineage>
</organism>
<feature type="chain" id="PRO_0000074632" description="Uncharacterized N-acetyltransferase MJ1530">
    <location>
        <begin position="1"/>
        <end position="156"/>
    </location>
</feature>
<feature type="domain" description="N-acetyltransferase" evidence="1">
    <location>
        <begin position="1"/>
        <end position="145"/>
    </location>
</feature>
<protein>
    <recommendedName>
        <fullName>Uncharacterized N-acetyltransferase MJ1530</fullName>
        <ecNumber>2.3.1.-</ecNumber>
    </recommendedName>
</protein>
<comment type="subcellular location">
    <subcellularLocation>
        <location evidence="2">Cytoplasm</location>
    </subcellularLocation>
</comment>
<comment type="similarity">
    <text evidence="2">Belongs to the acetyltransferase family.</text>
</comment>
<reference key="1">
    <citation type="journal article" date="1996" name="Science">
        <title>Complete genome sequence of the methanogenic archaeon, Methanococcus jannaschii.</title>
        <authorList>
            <person name="Bult C.J."/>
            <person name="White O."/>
            <person name="Olsen G.J."/>
            <person name="Zhou L."/>
            <person name="Fleischmann R.D."/>
            <person name="Sutton G.G."/>
            <person name="Blake J.A."/>
            <person name="FitzGerald L.M."/>
            <person name="Clayton R.A."/>
            <person name="Gocayne J.D."/>
            <person name="Kerlavage A.R."/>
            <person name="Dougherty B.A."/>
            <person name="Tomb J.-F."/>
            <person name="Adams M.D."/>
            <person name="Reich C.I."/>
            <person name="Overbeek R."/>
            <person name="Kirkness E.F."/>
            <person name="Weinstock K.G."/>
            <person name="Merrick J.M."/>
            <person name="Glodek A."/>
            <person name="Scott J.L."/>
            <person name="Geoghagen N.S.M."/>
            <person name="Weidman J.F."/>
            <person name="Fuhrmann J.L."/>
            <person name="Nguyen D."/>
            <person name="Utterback T.R."/>
            <person name="Kelley J.M."/>
            <person name="Peterson J.D."/>
            <person name="Sadow P.W."/>
            <person name="Hanna M.C."/>
            <person name="Cotton M.D."/>
            <person name="Roberts K.M."/>
            <person name="Hurst M.A."/>
            <person name="Kaine B.P."/>
            <person name="Borodovsky M."/>
            <person name="Klenk H.-P."/>
            <person name="Fraser C.M."/>
            <person name="Smith H.O."/>
            <person name="Woese C.R."/>
            <person name="Venter J.C."/>
        </authorList>
    </citation>
    <scope>NUCLEOTIDE SEQUENCE [LARGE SCALE GENOMIC DNA]</scope>
    <source>
        <strain>ATCC 43067 / DSM 2661 / JAL-1 / JCM 10045 / NBRC 100440</strain>
    </source>
</reference>
<accession>Q58925</accession>
<keyword id="KW-0012">Acyltransferase</keyword>
<keyword id="KW-0963">Cytoplasm</keyword>
<keyword id="KW-1185">Reference proteome</keyword>
<keyword id="KW-0808">Transferase</keyword>